<feature type="chain" id="PRO_0000126486" description="Small ribosomal subunit protein uS8">
    <location>
        <begin position="1"/>
        <end position="132"/>
    </location>
</feature>
<evidence type="ECO:0000255" key="1">
    <source>
        <dbReference type="HAMAP-Rule" id="MF_01302"/>
    </source>
</evidence>
<evidence type="ECO:0000305" key="2"/>
<keyword id="KW-0687">Ribonucleoprotein</keyword>
<keyword id="KW-0689">Ribosomal protein</keyword>
<keyword id="KW-0694">RNA-binding</keyword>
<keyword id="KW-0699">rRNA-binding</keyword>
<dbReference type="EMBL" id="BX571856">
    <property type="protein sequence ID" value="CAG41302.1"/>
    <property type="molecule type" value="Genomic_DNA"/>
</dbReference>
<dbReference type="RefSeq" id="WP_000178881.1">
    <property type="nucleotide sequence ID" value="NC_002952.2"/>
</dbReference>
<dbReference type="SMR" id="Q6GEJ7"/>
<dbReference type="GeneID" id="98346548"/>
<dbReference type="KEGG" id="sar:SAR2321"/>
<dbReference type="HOGENOM" id="CLU_098428_0_2_9"/>
<dbReference type="Proteomes" id="UP000000596">
    <property type="component" value="Chromosome"/>
</dbReference>
<dbReference type="GO" id="GO:1990904">
    <property type="term" value="C:ribonucleoprotein complex"/>
    <property type="evidence" value="ECO:0007669"/>
    <property type="project" value="UniProtKB-KW"/>
</dbReference>
<dbReference type="GO" id="GO:0005840">
    <property type="term" value="C:ribosome"/>
    <property type="evidence" value="ECO:0007669"/>
    <property type="project" value="UniProtKB-KW"/>
</dbReference>
<dbReference type="GO" id="GO:0019843">
    <property type="term" value="F:rRNA binding"/>
    <property type="evidence" value="ECO:0007669"/>
    <property type="project" value="UniProtKB-UniRule"/>
</dbReference>
<dbReference type="GO" id="GO:0003735">
    <property type="term" value="F:structural constituent of ribosome"/>
    <property type="evidence" value="ECO:0007669"/>
    <property type="project" value="InterPro"/>
</dbReference>
<dbReference type="GO" id="GO:0006412">
    <property type="term" value="P:translation"/>
    <property type="evidence" value="ECO:0007669"/>
    <property type="project" value="UniProtKB-UniRule"/>
</dbReference>
<dbReference type="FunFam" id="3.30.1370.30:FF:000002">
    <property type="entry name" value="30S ribosomal protein S8"/>
    <property type="match status" value="1"/>
</dbReference>
<dbReference type="FunFam" id="3.30.1490.10:FF:000001">
    <property type="entry name" value="30S ribosomal protein S8"/>
    <property type="match status" value="1"/>
</dbReference>
<dbReference type="Gene3D" id="3.30.1370.30">
    <property type="match status" value="1"/>
</dbReference>
<dbReference type="Gene3D" id="3.30.1490.10">
    <property type="match status" value="1"/>
</dbReference>
<dbReference type="HAMAP" id="MF_01302_B">
    <property type="entry name" value="Ribosomal_uS8_B"/>
    <property type="match status" value="1"/>
</dbReference>
<dbReference type="InterPro" id="IPR000630">
    <property type="entry name" value="Ribosomal_uS8"/>
</dbReference>
<dbReference type="InterPro" id="IPR047863">
    <property type="entry name" value="Ribosomal_uS8_CS"/>
</dbReference>
<dbReference type="InterPro" id="IPR035987">
    <property type="entry name" value="Ribosomal_uS8_sf"/>
</dbReference>
<dbReference type="NCBIfam" id="NF001109">
    <property type="entry name" value="PRK00136.1"/>
    <property type="match status" value="1"/>
</dbReference>
<dbReference type="PANTHER" id="PTHR11758">
    <property type="entry name" value="40S RIBOSOMAL PROTEIN S15A"/>
    <property type="match status" value="1"/>
</dbReference>
<dbReference type="Pfam" id="PF00410">
    <property type="entry name" value="Ribosomal_S8"/>
    <property type="match status" value="1"/>
</dbReference>
<dbReference type="SUPFAM" id="SSF56047">
    <property type="entry name" value="Ribosomal protein S8"/>
    <property type="match status" value="1"/>
</dbReference>
<dbReference type="PROSITE" id="PS00053">
    <property type="entry name" value="RIBOSOMAL_S8"/>
    <property type="match status" value="1"/>
</dbReference>
<comment type="function">
    <text evidence="1">One of the primary rRNA binding proteins, it binds directly to 16S rRNA central domain where it helps coordinate assembly of the platform of the 30S subunit.</text>
</comment>
<comment type="subunit">
    <text evidence="1">Part of the 30S ribosomal subunit. Contacts proteins S5 and S12.</text>
</comment>
<comment type="similarity">
    <text evidence="1">Belongs to the universal ribosomal protein uS8 family.</text>
</comment>
<name>RS8_STAAR</name>
<reference key="1">
    <citation type="journal article" date="2004" name="Proc. Natl. Acad. Sci. U.S.A.">
        <title>Complete genomes of two clinical Staphylococcus aureus strains: evidence for the rapid evolution of virulence and drug resistance.</title>
        <authorList>
            <person name="Holden M.T.G."/>
            <person name="Feil E.J."/>
            <person name="Lindsay J.A."/>
            <person name="Peacock S.J."/>
            <person name="Day N.P.J."/>
            <person name="Enright M.C."/>
            <person name="Foster T.J."/>
            <person name="Moore C.E."/>
            <person name="Hurst L."/>
            <person name="Atkin R."/>
            <person name="Barron A."/>
            <person name="Bason N."/>
            <person name="Bentley S.D."/>
            <person name="Chillingworth C."/>
            <person name="Chillingworth T."/>
            <person name="Churcher C."/>
            <person name="Clark L."/>
            <person name="Corton C."/>
            <person name="Cronin A."/>
            <person name="Doggett J."/>
            <person name="Dowd L."/>
            <person name="Feltwell T."/>
            <person name="Hance Z."/>
            <person name="Harris B."/>
            <person name="Hauser H."/>
            <person name="Holroyd S."/>
            <person name="Jagels K."/>
            <person name="James K.D."/>
            <person name="Lennard N."/>
            <person name="Line A."/>
            <person name="Mayes R."/>
            <person name="Moule S."/>
            <person name="Mungall K."/>
            <person name="Ormond D."/>
            <person name="Quail M.A."/>
            <person name="Rabbinowitsch E."/>
            <person name="Rutherford K.M."/>
            <person name="Sanders M."/>
            <person name="Sharp S."/>
            <person name="Simmonds M."/>
            <person name="Stevens K."/>
            <person name="Whitehead S."/>
            <person name="Barrell B.G."/>
            <person name="Spratt B.G."/>
            <person name="Parkhill J."/>
        </authorList>
    </citation>
    <scope>NUCLEOTIDE SEQUENCE [LARGE SCALE GENOMIC DNA]</scope>
    <source>
        <strain>MRSA252</strain>
    </source>
</reference>
<gene>
    <name evidence="1" type="primary">rpsH</name>
    <name type="ordered locus">SAR2321</name>
</gene>
<accession>Q6GEJ7</accession>
<proteinExistence type="inferred from homology"/>
<protein>
    <recommendedName>
        <fullName evidence="1">Small ribosomal subunit protein uS8</fullName>
    </recommendedName>
    <alternativeName>
        <fullName evidence="2">30S ribosomal protein S8</fullName>
    </alternativeName>
</protein>
<sequence length="132" mass="14831">MTMTDPIADMLTRVRNANMVRHEKLELPASNIKKEIAEILKSEGFIKNVEYVEDDKQGVLRLFLKYGQNDERVITGLKRISKPGLRVYAKASEMPKVLNGLGIALVSTSEGVITDKEARKRNVGGEIIAYVW</sequence>
<organism>
    <name type="scientific">Staphylococcus aureus (strain MRSA252)</name>
    <dbReference type="NCBI Taxonomy" id="282458"/>
    <lineage>
        <taxon>Bacteria</taxon>
        <taxon>Bacillati</taxon>
        <taxon>Bacillota</taxon>
        <taxon>Bacilli</taxon>
        <taxon>Bacillales</taxon>
        <taxon>Staphylococcaceae</taxon>
        <taxon>Staphylococcus</taxon>
    </lineage>
</organism>